<comment type="function">
    <text evidence="1">NDH-1 shuttles electrons from NADH, via FMN and iron-sulfur (Fe-S) centers, to quinones in the respiratory chain. The immediate electron acceptor for the enzyme in this species is believed to be ubiquinone. Couples the redox reaction to proton translocation (for every two electrons transferred, four hydrogen ions are translocated across the cytoplasmic membrane), and thus conserves the redox energy in a proton gradient.</text>
</comment>
<comment type="catalytic activity">
    <reaction evidence="1">
        <text>a quinone + NADH + 5 H(+)(in) = a quinol + NAD(+) + 4 H(+)(out)</text>
        <dbReference type="Rhea" id="RHEA:57888"/>
        <dbReference type="ChEBI" id="CHEBI:15378"/>
        <dbReference type="ChEBI" id="CHEBI:24646"/>
        <dbReference type="ChEBI" id="CHEBI:57540"/>
        <dbReference type="ChEBI" id="CHEBI:57945"/>
        <dbReference type="ChEBI" id="CHEBI:132124"/>
    </reaction>
</comment>
<comment type="cofactor">
    <cofactor evidence="1">
        <name>[4Fe-4S] cluster</name>
        <dbReference type="ChEBI" id="CHEBI:49883"/>
    </cofactor>
    <text evidence="1">Binds 1 [4Fe-4S] cluster.</text>
</comment>
<comment type="subunit">
    <text evidence="1">NDH-1 is composed of 14 different subunits. Subunits NuoB, C, D, E, F, and G constitute the peripheral sector of the complex.</text>
</comment>
<comment type="subcellular location">
    <subcellularLocation>
        <location evidence="1">Cell inner membrane</location>
        <topology evidence="1">Peripheral membrane protein</topology>
        <orientation evidence="1">Cytoplasmic side</orientation>
    </subcellularLocation>
</comment>
<comment type="similarity">
    <text evidence="1">Belongs to the complex I 20 kDa subunit family.</text>
</comment>
<reference key="1">
    <citation type="journal article" date="2006" name="Proc. Natl. Acad. Sci. U.S.A.">
        <title>The complete genome sequence of a chronic atrophic gastritis Helicobacter pylori strain: evolution during disease progression.</title>
        <authorList>
            <person name="Oh J.D."/>
            <person name="Kling-Baeckhed H."/>
            <person name="Giannakis M."/>
            <person name="Xu J."/>
            <person name="Fulton R.S."/>
            <person name="Fulton L.A."/>
            <person name="Cordum H.S."/>
            <person name="Wang C."/>
            <person name="Elliott G."/>
            <person name="Edwards J."/>
            <person name="Mardis E.R."/>
            <person name="Engstrand L.G."/>
            <person name="Gordon J.I."/>
        </authorList>
    </citation>
    <scope>NUCLEOTIDE SEQUENCE [LARGE SCALE GENOMIC DNA]</scope>
    <source>
        <strain>HPAG1</strain>
    </source>
</reference>
<dbReference type="EC" id="7.1.1.-" evidence="1"/>
<dbReference type="EMBL" id="CP000241">
    <property type="protein sequence ID" value="ABF85272.1"/>
    <property type="molecule type" value="Genomic_DNA"/>
</dbReference>
<dbReference type="RefSeq" id="WP_001183511.1">
    <property type="nucleotide sequence ID" value="NC_008086.1"/>
</dbReference>
<dbReference type="SMR" id="Q1CS00"/>
<dbReference type="KEGG" id="hpa:HPAG1_1205"/>
<dbReference type="HOGENOM" id="CLU_055737_7_3_7"/>
<dbReference type="GO" id="GO:0005886">
    <property type="term" value="C:plasma membrane"/>
    <property type="evidence" value="ECO:0007669"/>
    <property type="project" value="UniProtKB-SubCell"/>
</dbReference>
<dbReference type="GO" id="GO:0045271">
    <property type="term" value="C:respiratory chain complex I"/>
    <property type="evidence" value="ECO:0007669"/>
    <property type="project" value="TreeGrafter"/>
</dbReference>
<dbReference type="GO" id="GO:0051539">
    <property type="term" value="F:4 iron, 4 sulfur cluster binding"/>
    <property type="evidence" value="ECO:0007669"/>
    <property type="project" value="UniProtKB-KW"/>
</dbReference>
<dbReference type="GO" id="GO:0005506">
    <property type="term" value="F:iron ion binding"/>
    <property type="evidence" value="ECO:0007669"/>
    <property type="project" value="UniProtKB-UniRule"/>
</dbReference>
<dbReference type="GO" id="GO:0008137">
    <property type="term" value="F:NADH dehydrogenase (ubiquinone) activity"/>
    <property type="evidence" value="ECO:0007669"/>
    <property type="project" value="InterPro"/>
</dbReference>
<dbReference type="GO" id="GO:0050136">
    <property type="term" value="F:NADH:ubiquinone reductase (non-electrogenic) activity"/>
    <property type="evidence" value="ECO:0007669"/>
    <property type="project" value="UniProtKB-UniRule"/>
</dbReference>
<dbReference type="GO" id="GO:0048038">
    <property type="term" value="F:quinone binding"/>
    <property type="evidence" value="ECO:0007669"/>
    <property type="project" value="UniProtKB-KW"/>
</dbReference>
<dbReference type="GO" id="GO:0009060">
    <property type="term" value="P:aerobic respiration"/>
    <property type="evidence" value="ECO:0007669"/>
    <property type="project" value="TreeGrafter"/>
</dbReference>
<dbReference type="GO" id="GO:0015990">
    <property type="term" value="P:electron transport coupled proton transport"/>
    <property type="evidence" value="ECO:0007669"/>
    <property type="project" value="TreeGrafter"/>
</dbReference>
<dbReference type="FunFam" id="3.40.50.12280:FF:000002">
    <property type="entry name" value="NADH-quinone oxidoreductase subunit B"/>
    <property type="match status" value="1"/>
</dbReference>
<dbReference type="Gene3D" id="3.40.50.12280">
    <property type="match status" value="1"/>
</dbReference>
<dbReference type="HAMAP" id="MF_01356">
    <property type="entry name" value="NDH1_NuoB"/>
    <property type="match status" value="1"/>
</dbReference>
<dbReference type="InterPro" id="IPR006137">
    <property type="entry name" value="NADH_UbQ_OxRdtase-like_20kDa"/>
</dbReference>
<dbReference type="InterPro" id="IPR006138">
    <property type="entry name" value="NADH_UQ_OxRdtase_20Kd_su"/>
</dbReference>
<dbReference type="NCBIfam" id="TIGR01957">
    <property type="entry name" value="nuoB_fam"/>
    <property type="match status" value="1"/>
</dbReference>
<dbReference type="NCBIfam" id="NF005012">
    <property type="entry name" value="PRK06411.1"/>
    <property type="match status" value="1"/>
</dbReference>
<dbReference type="PANTHER" id="PTHR11995">
    <property type="entry name" value="NADH DEHYDROGENASE"/>
    <property type="match status" value="1"/>
</dbReference>
<dbReference type="PANTHER" id="PTHR11995:SF14">
    <property type="entry name" value="NADH DEHYDROGENASE [UBIQUINONE] IRON-SULFUR PROTEIN 7, MITOCHONDRIAL"/>
    <property type="match status" value="1"/>
</dbReference>
<dbReference type="Pfam" id="PF01058">
    <property type="entry name" value="Oxidored_q6"/>
    <property type="match status" value="1"/>
</dbReference>
<dbReference type="SUPFAM" id="SSF56770">
    <property type="entry name" value="HydA/Nqo6-like"/>
    <property type="match status" value="1"/>
</dbReference>
<protein>
    <recommendedName>
        <fullName evidence="1">NADH-quinone oxidoreductase subunit B</fullName>
        <ecNumber evidence="1">7.1.1.-</ecNumber>
    </recommendedName>
    <alternativeName>
        <fullName evidence="1">NADH dehydrogenase I subunit B</fullName>
    </alternativeName>
    <alternativeName>
        <fullName evidence="1">NDH-1 subunit B</fullName>
    </alternativeName>
</protein>
<sequence length="159" mass="17809">MQQAPVVLSTLDKLLNWGRSNSLWPLTYGLACCAIEMMATGGSRFDFDRFGTIFRASPRQSDVMIIAGTLTKKHAEFMRRLYDQMPEPKWVISMGSCANTGGMFNTYATVQGADRVVPVDIYLPGCAPRPETLQYALMVLQDKIRRSKAIKQDAPKRLV</sequence>
<accession>Q1CS00</accession>
<organism>
    <name type="scientific">Helicobacter pylori (strain HPAG1)</name>
    <dbReference type="NCBI Taxonomy" id="357544"/>
    <lineage>
        <taxon>Bacteria</taxon>
        <taxon>Pseudomonadati</taxon>
        <taxon>Campylobacterota</taxon>
        <taxon>Epsilonproteobacteria</taxon>
        <taxon>Campylobacterales</taxon>
        <taxon>Helicobacteraceae</taxon>
        <taxon>Helicobacter</taxon>
    </lineage>
</organism>
<name>NUOB_HELPH</name>
<feature type="chain" id="PRO_0000376249" description="NADH-quinone oxidoreductase subunit B">
    <location>
        <begin position="1"/>
        <end position="159"/>
    </location>
</feature>
<feature type="binding site" evidence="1">
    <location>
        <position position="32"/>
    </location>
    <ligand>
        <name>[4Fe-4S] cluster</name>
        <dbReference type="ChEBI" id="CHEBI:49883"/>
    </ligand>
</feature>
<feature type="binding site" evidence="1">
    <location>
        <position position="33"/>
    </location>
    <ligand>
        <name>[4Fe-4S] cluster</name>
        <dbReference type="ChEBI" id="CHEBI:49883"/>
    </ligand>
</feature>
<feature type="binding site" evidence="1">
    <location>
        <position position="97"/>
    </location>
    <ligand>
        <name>[4Fe-4S] cluster</name>
        <dbReference type="ChEBI" id="CHEBI:49883"/>
    </ligand>
</feature>
<feature type="binding site" evidence="1">
    <location>
        <position position="126"/>
    </location>
    <ligand>
        <name>[4Fe-4S] cluster</name>
        <dbReference type="ChEBI" id="CHEBI:49883"/>
    </ligand>
</feature>
<evidence type="ECO:0000255" key="1">
    <source>
        <dbReference type="HAMAP-Rule" id="MF_01356"/>
    </source>
</evidence>
<gene>
    <name evidence="1" type="primary">nuoB</name>
    <name type="ordered locus">HPAG1_1205</name>
</gene>
<keyword id="KW-0004">4Fe-4S</keyword>
<keyword id="KW-0997">Cell inner membrane</keyword>
<keyword id="KW-1003">Cell membrane</keyword>
<keyword id="KW-0408">Iron</keyword>
<keyword id="KW-0411">Iron-sulfur</keyword>
<keyword id="KW-0472">Membrane</keyword>
<keyword id="KW-0479">Metal-binding</keyword>
<keyword id="KW-0520">NAD</keyword>
<keyword id="KW-0874">Quinone</keyword>
<keyword id="KW-1278">Translocase</keyword>
<keyword id="KW-0813">Transport</keyword>
<keyword id="KW-0830">Ubiquinone</keyword>
<proteinExistence type="inferred from homology"/>